<sequence length="77" mass="8405">MSDIADRVKKIVVEHLGVEEEKVTENASFIDDLGADSLDTVELVMAFEEEFGIEIPDDAAETIQTFGDAVKFISEAA</sequence>
<name>ACP_CERSK</name>
<accession>B9KQD1</accession>
<gene>
    <name evidence="1" type="primary">acpP</name>
    <name type="ordered locus">RSKD131_0778</name>
</gene>
<dbReference type="EMBL" id="CP001150">
    <property type="protein sequence ID" value="ACM00638.1"/>
    <property type="molecule type" value="Genomic_DNA"/>
</dbReference>
<dbReference type="RefSeq" id="WP_002719616.1">
    <property type="nucleotide sequence ID" value="NC_011963.1"/>
</dbReference>
<dbReference type="SMR" id="B9KQD1"/>
<dbReference type="GeneID" id="67446221"/>
<dbReference type="KEGG" id="rsk:RSKD131_0778"/>
<dbReference type="HOGENOM" id="CLU_108696_5_1_5"/>
<dbReference type="UniPathway" id="UPA00094"/>
<dbReference type="GO" id="GO:0005829">
    <property type="term" value="C:cytosol"/>
    <property type="evidence" value="ECO:0007669"/>
    <property type="project" value="TreeGrafter"/>
</dbReference>
<dbReference type="GO" id="GO:0016020">
    <property type="term" value="C:membrane"/>
    <property type="evidence" value="ECO:0007669"/>
    <property type="project" value="GOC"/>
</dbReference>
<dbReference type="GO" id="GO:0000035">
    <property type="term" value="F:acyl binding"/>
    <property type="evidence" value="ECO:0007669"/>
    <property type="project" value="TreeGrafter"/>
</dbReference>
<dbReference type="GO" id="GO:0000036">
    <property type="term" value="F:acyl carrier activity"/>
    <property type="evidence" value="ECO:0007669"/>
    <property type="project" value="UniProtKB-UniRule"/>
</dbReference>
<dbReference type="GO" id="GO:0009245">
    <property type="term" value="P:lipid A biosynthetic process"/>
    <property type="evidence" value="ECO:0007669"/>
    <property type="project" value="TreeGrafter"/>
</dbReference>
<dbReference type="FunFam" id="1.10.1200.10:FF:000001">
    <property type="entry name" value="Acyl carrier protein"/>
    <property type="match status" value="1"/>
</dbReference>
<dbReference type="Gene3D" id="1.10.1200.10">
    <property type="entry name" value="ACP-like"/>
    <property type="match status" value="1"/>
</dbReference>
<dbReference type="HAMAP" id="MF_01217">
    <property type="entry name" value="Acyl_carrier"/>
    <property type="match status" value="1"/>
</dbReference>
<dbReference type="InterPro" id="IPR003231">
    <property type="entry name" value="ACP"/>
</dbReference>
<dbReference type="InterPro" id="IPR036736">
    <property type="entry name" value="ACP-like_sf"/>
</dbReference>
<dbReference type="InterPro" id="IPR009081">
    <property type="entry name" value="PP-bd_ACP"/>
</dbReference>
<dbReference type="InterPro" id="IPR006162">
    <property type="entry name" value="Ppantetheine_attach_site"/>
</dbReference>
<dbReference type="NCBIfam" id="TIGR00517">
    <property type="entry name" value="acyl_carrier"/>
    <property type="match status" value="1"/>
</dbReference>
<dbReference type="NCBIfam" id="NF002148">
    <property type="entry name" value="PRK00982.1-2"/>
    <property type="match status" value="1"/>
</dbReference>
<dbReference type="NCBIfam" id="NF002149">
    <property type="entry name" value="PRK00982.1-3"/>
    <property type="match status" value="1"/>
</dbReference>
<dbReference type="NCBIfam" id="NF002150">
    <property type="entry name" value="PRK00982.1-4"/>
    <property type="match status" value="1"/>
</dbReference>
<dbReference type="NCBIfam" id="NF002151">
    <property type="entry name" value="PRK00982.1-5"/>
    <property type="match status" value="1"/>
</dbReference>
<dbReference type="PANTHER" id="PTHR20863">
    <property type="entry name" value="ACYL CARRIER PROTEIN"/>
    <property type="match status" value="1"/>
</dbReference>
<dbReference type="PANTHER" id="PTHR20863:SF76">
    <property type="entry name" value="CARRIER DOMAIN-CONTAINING PROTEIN"/>
    <property type="match status" value="1"/>
</dbReference>
<dbReference type="Pfam" id="PF00550">
    <property type="entry name" value="PP-binding"/>
    <property type="match status" value="1"/>
</dbReference>
<dbReference type="SUPFAM" id="SSF47336">
    <property type="entry name" value="ACP-like"/>
    <property type="match status" value="1"/>
</dbReference>
<dbReference type="PROSITE" id="PS50075">
    <property type="entry name" value="CARRIER"/>
    <property type="match status" value="1"/>
</dbReference>
<dbReference type="PROSITE" id="PS00012">
    <property type="entry name" value="PHOSPHOPANTETHEINE"/>
    <property type="match status" value="1"/>
</dbReference>
<evidence type="ECO:0000255" key="1">
    <source>
        <dbReference type="HAMAP-Rule" id="MF_01217"/>
    </source>
</evidence>
<evidence type="ECO:0000255" key="2">
    <source>
        <dbReference type="PROSITE-ProRule" id="PRU00258"/>
    </source>
</evidence>
<comment type="function">
    <text evidence="1">Carrier of the growing fatty acid chain in fatty acid biosynthesis.</text>
</comment>
<comment type="pathway">
    <text evidence="1">Lipid metabolism; fatty acid biosynthesis.</text>
</comment>
<comment type="subcellular location">
    <subcellularLocation>
        <location evidence="1">Cytoplasm</location>
    </subcellularLocation>
</comment>
<comment type="PTM">
    <text evidence="1">4'-phosphopantetheine is transferred from CoA to a specific serine of apo-ACP by AcpS. This modification is essential for activity because fatty acids are bound in thioester linkage to the sulfhydryl of the prosthetic group.</text>
</comment>
<comment type="similarity">
    <text evidence="1">Belongs to the acyl carrier protein (ACP) family.</text>
</comment>
<protein>
    <recommendedName>
        <fullName evidence="1">Acyl carrier protein</fullName>
        <shortName evidence="1">ACP</shortName>
    </recommendedName>
</protein>
<feature type="chain" id="PRO_1000164800" description="Acyl carrier protein">
    <location>
        <begin position="1"/>
        <end position="77"/>
    </location>
</feature>
<feature type="domain" description="Carrier" evidence="2">
    <location>
        <begin position="2"/>
        <end position="77"/>
    </location>
</feature>
<feature type="modified residue" description="O-(pantetheine 4'-phosphoryl)serine" evidence="2">
    <location>
        <position position="37"/>
    </location>
</feature>
<organism>
    <name type="scientific">Cereibacter sphaeroides (strain KD131 / KCTC 12085)</name>
    <name type="common">Rhodobacter sphaeroides</name>
    <dbReference type="NCBI Taxonomy" id="557760"/>
    <lineage>
        <taxon>Bacteria</taxon>
        <taxon>Pseudomonadati</taxon>
        <taxon>Pseudomonadota</taxon>
        <taxon>Alphaproteobacteria</taxon>
        <taxon>Rhodobacterales</taxon>
        <taxon>Paracoccaceae</taxon>
        <taxon>Cereibacter</taxon>
    </lineage>
</organism>
<keyword id="KW-0963">Cytoplasm</keyword>
<keyword id="KW-0275">Fatty acid biosynthesis</keyword>
<keyword id="KW-0276">Fatty acid metabolism</keyword>
<keyword id="KW-0444">Lipid biosynthesis</keyword>
<keyword id="KW-0443">Lipid metabolism</keyword>
<keyword id="KW-0596">Phosphopantetheine</keyword>
<keyword id="KW-0597">Phosphoprotein</keyword>
<reference key="1">
    <citation type="journal article" date="2009" name="J. Bacteriol.">
        <title>Complete genome sequence of Rhodobacter sphaeroides KD131.</title>
        <authorList>
            <person name="Lim S.-K."/>
            <person name="Kim S.J."/>
            <person name="Cha S.H."/>
            <person name="Oh Y.-K."/>
            <person name="Rhee H.-J."/>
            <person name="Kim M.-S."/>
            <person name="Lee J.K."/>
        </authorList>
    </citation>
    <scope>NUCLEOTIDE SEQUENCE [LARGE SCALE GENOMIC DNA]</scope>
    <source>
        <strain>KD131 / KCTC 12085</strain>
    </source>
</reference>
<proteinExistence type="inferred from homology"/>